<reference key="1">
    <citation type="journal article" date="2010" name="Appl. Environ. Microbiol.">
        <title>Conserved symbiotic plasmid DNA sequences in the multireplicon pangenomic structure of Rhizobium etli.</title>
        <authorList>
            <person name="Gonzalez V."/>
            <person name="Acosta J.L."/>
            <person name="Santamaria R.I."/>
            <person name="Bustos P."/>
            <person name="Fernandez J.L."/>
            <person name="Hernandez Gonzalez I.L."/>
            <person name="Diaz R."/>
            <person name="Flores M."/>
            <person name="Palacios R."/>
            <person name="Mora J."/>
            <person name="Davila G."/>
        </authorList>
    </citation>
    <scope>NUCLEOTIDE SEQUENCE [LARGE SCALE GENOMIC DNA]</scope>
    <source>
        <strain>CIAT 652</strain>
    </source>
</reference>
<proteinExistence type="inferred from homology"/>
<feature type="chain" id="PRO_1000137116" description="N-acetyl-gamma-glutamyl-phosphate reductase">
    <location>
        <begin position="1"/>
        <end position="310"/>
    </location>
</feature>
<feature type="active site" evidence="1">
    <location>
        <position position="117"/>
    </location>
</feature>
<gene>
    <name evidence="1" type="primary">argC</name>
    <name type="ordered locus">RHECIAT_CH0001636</name>
</gene>
<dbReference type="EC" id="1.2.1.38" evidence="1"/>
<dbReference type="EMBL" id="CP001074">
    <property type="protein sequence ID" value="ACE90613.1"/>
    <property type="molecule type" value="Genomic_DNA"/>
</dbReference>
<dbReference type="SMR" id="B3PVH2"/>
<dbReference type="KEGG" id="rec:RHECIAT_CH0001636"/>
<dbReference type="eggNOG" id="COG0002">
    <property type="taxonomic scope" value="Bacteria"/>
</dbReference>
<dbReference type="HOGENOM" id="CLU_077118_0_0_5"/>
<dbReference type="UniPathway" id="UPA00068">
    <property type="reaction ID" value="UER00108"/>
</dbReference>
<dbReference type="Proteomes" id="UP000008817">
    <property type="component" value="Chromosome"/>
</dbReference>
<dbReference type="GO" id="GO:0005737">
    <property type="term" value="C:cytoplasm"/>
    <property type="evidence" value="ECO:0007669"/>
    <property type="project" value="UniProtKB-SubCell"/>
</dbReference>
<dbReference type="GO" id="GO:0003942">
    <property type="term" value="F:N-acetyl-gamma-glutamyl-phosphate reductase activity"/>
    <property type="evidence" value="ECO:0007669"/>
    <property type="project" value="UniProtKB-UniRule"/>
</dbReference>
<dbReference type="GO" id="GO:0051287">
    <property type="term" value="F:NAD binding"/>
    <property type="evidence" value="ECO:0007669"/>
    <property type="project" value="InterPro"/>
</dbReference>
<dbReference type="GO" id="GO:0006526">
    <property type="term" value="P:L-arginine biosynthetic process"/>
    <property type="evidence" value="ECO:0007669"/>
    <property type="project" value="UniProtKB-UniRule"/>
</dbReference>
<dbReference type="CDD" id="cd23935">
    <property type="entry name" value="AGPR_2_C"/>
    <property type="match status" value="1"/>
</dbReference>
<dbReference type="CDD" id="cd17896">
    <property type="entry name" value="AGPR_2_N"/>
    <property type="match status" value="1"/>
</dbReference>
<dbReference type="Gene3D" id="3.30.360.10">
    <property type="entry name" value="Dihydrodipicolinate Reductase, domain 2"/>
    <property type="match status" value="1"/>
</dbReference>
<dbReference type="Gene3D" id="3.40.50.720">
    <property type="entry name" value="NAD(P)-binding Rossmann-like Domain"/>
    <property type="match status" value="1"/>
</dbReference>
<dbReference type="HAMAP" id="MF_01110">
    <property type="entry name" value="ArgC_type2"/>
    <property type="match status" value="1"/>
</dbReference>
<dbReference type="InterPro" id="IPR023013">
    <property type="entry name" value="AGPR_AS"/>
</dbReference>
<dbReference type="InterPro" id="IPR010136">
    <property type="entry name" value="AGPR_type-2"/>
</dbReference>
<dbReference type="InterPro" id="IPR036291">
    <property type="entry name" value="NAD(P)-bd_dom_sf"/>
</dbReference>
<dbReference type="InterPro" id="IPR050085">
    <property type="entry name" value="NAGSA_dehydrogenase"/>
</dbReference>
<dbReference type="InterPro" id="IPR000534">
    <property type="entry name" value="Semialdehyde_DH_NAD-bd"/>
</dbReference>
<dbReference type="NCBIfam" id="TIGR01851">
    <property type="entry name" value="argC_other"/>
    <property type="match status" value="1"/>
</dbReference>
<dbReference type="PANTHER" id="PTHR32338:SF10">
    <property type="entry name" value="N-ACETYL-GAMMA-GLUTAMYL-PHOSPHATE REDUCTASE, CHLOROPLASTIC-RELATED"/>
    <property type="match status" value="1"/>
</dbReference>
<dbReference type="PANTHER" id="PTHR32338">
    <property type="entry name" value="N-ACETYL-GAMMA-GLUTAMYL-PHOSPHATE REDUCTASE, CHLOROPLASTIC-RELATED-RELATED"/>
    <property type="match status" value="1"/>
</dbReference>
<dbReference type="Pfam" id="PF01118">
    <property type="entry name" value="Semialdhyde_dh"/>
    <property type="match status" value="1"/>
</dbReference>
<dbReference type="Pfam" id="PF22698">
    <property type="entry name" value="Semialdhyde_dhC_1"/>
    <property type="match status" value="1"/>
</dbReference>
<dbReference type="SMART" id="SM00859">
    <property type="entry name" value="Semialdhyde_dh"/>
    <property type="match status" value="1"/>
</dbReference>
<dbReference type="SUPFAM" id="SSF55347">
    <property type="entry name" value="Glyceraldehyde-3-phosphate dehydrogenase-like, C-terminal domain"/>
    <property type="match status" value="1"/>
</dbReference>
<dbReference type="SUPFAM" id="SSF51735">
    <property type="entry name" value="NAD(P)-binding Rossmann-fold domains"/>
    <property type="match status" value="1"/>
</dbReference>
<dbReference type="PROSITE" id="PS01224">
    <property type="entry name" value="ARGC"/>
    <property type="match status" value="1"/>
</dbReference>
<organism>
    <name type="scientific">Rhizobium etli (strain CIAT 652)</name>
    <dbReference type="NCBI Taxonomy" id="491916"/>
    <lineage>
        <taxon>Bacteria</taxon>
        <taxon>Pseudomonadati</taxon>
        <taxon>Pseudomonadota</taxon>
        <taxon>Alphaproteobacteria</taxon>
        <taxon>Hyphomicrobiales</taxon>
        <taxon>Rhizobiaceae</taxon>
        <taxon>Rhizobium/Agrobacterium group</taxon>
        <taxon>Rhizobium</taxon>
    </lineage>
</organism>
<accession>B3PVH2</accession>
<name>ARGC_RHIE6</name>
<keyword id="KW-0028">Amino-acid biosynthesis</keyword>
<keyword id="KW-0055">Arginine biosynthesis</keyword>
<keyword id="KW-0963">Cytoplasm</keyword>
<keyword id="KW-0521">NADP</keyword>
<keyword id="KW-0560">Oxidoreductase</keyword>
<evidence type="ECO:0000255" key="1">
    <source>
        <dbReference type="HAMAP-Rule" id="MF_01110"/>
    </source>
</evidence>
<sequence length="310" mass="32863">MAPKIFIDGEHGTTGLQIRTRMAGRRDVELLSIPEAERRNAAMREDMLNSADIAILCLPDDASKEAVQMVSANNNVRVIDTSTAFRVNPGWAYGFAEMDGAQADKIKAARFVANPGCYPTGAIGLIRPLRAAGILPDGYPVTVNAVSGYTGGGKQMIAQMENPDHPDAITAPHFLYGLPLTHKHVPEMTVHGLLDRAPIFSPSVGKFAQGMIVQVPLHLDDLAEGTTMESIHAALTAHYAGQDIVTVVPLADSKALARVNAVELEGKDTMKLFVFGTPGGSQVNLVALLDNLGKGASGAAVQNMDLMLAS</sequence>
<protein>
    <recommendedName>
        <fullName evidence="1">N-acetyl-gamma-glutamyl-phosphate reductase</fullName>
        <shortName evidence="1">AGPR</shortName>
        <ecNumber evidence="1">1.2.1.38</ecNumber>
    </recommendedName>
    <alternativeName>
        <fullName evidence="1">N-acetyl-glutamate semialdehyde dehydrogenase</fullName>
        <shortName evidence="1">NAGSA dehydrogenase</shortName>
    </alternativeName>
</protein>
<comment type="function">
    <text evidence="1">Catalyzes the NADPH-dependent reduction of N-acetyl-5-glutamyl phosphate to yield N-acetyl-L-glutamate 5-semialdehyde.</text>
</comment>
<comment type="catalytic activity">
    <reaction evidence="1">
        <text>N-acetyl-L-glutamate 5-semialdehyde + phosphate + NADP(+) = N-acetyl-L-glutamyl 5-phosphate + NADPH + H(+)</text>
        <dbReference type="Rhea" id="RHEA:21588"/>
        <dbReference type="ChEBI" id="CHEBI:15378"/>
        <dbReference type="ChEBI" id="CHEBI:29123"/>
        <dbReference type="ChEBI" id="CHEBI:43474"/>
        <dbReference type="ChEBI" id="CHEBI:57783"/>
        <dbReference type="ChEBI" id="CHEBI:57936"/>
        <dbReference type="ChEBI" id="CHEBI:58349"/>
        <dbReference type="EC" id="1.2.1.38"/>
    </reaction>
</comment>
<comment type="pathway">
    <text evidence="1">Amino-acid biosynthesis; L-arginine biosynthesis; N(2)-acetyl-L-ornithine from L-glutamate: step 3/4.</text>
</comment>
<comment type="subcellular location">
    <subcellularLocation>
        <location evidence="1">Cytoplasm</location>
    </subcellularLocation>
</comment>
<comment type="similarity">
    <text evidence="1">Belongs to the NAGSA dehydrogenase family. Type 2 subfamily.</text>
</comment>